<organism>
    <name type="scientific">Methylobacterium nodulans (strain LMG 21967 / CNCM I-2342 / ORS 2060)</name>
    <dbReference type="NCBI Taxonomy" id="460265"/>
    <lineage>
        <taxon>Bacteria</taxon>
        <taxon>Pseudomonadati</taxon>
        <taxon>Pseudomonadota</taxon>
        <taxon>Alphaproteobacteria</taxon>
        <taxon>Hyphomicrobiales</taxon>
        <taxon>Methylobacteriaceae</taxon>
        <taxon>Methylobacterium</taxon>
    </lineage>
</organism>
<accession>B8IPA1</accession>
<reference key="1">
    <citation type="submission" date="2009-01" db="EMBL/GenBank/DDBJ databases">
        <title>Complete sequence of chromosome of Methylobacterium nodulans ORS 2060.</title>
        <authorList>
            <consortium name="US DOE Joint Genome Institute"/>
            <person name="Lucas S."/>
            <person name="Copeland A."/>
            <person name="Lapidus A."/>
            <person name="Glavina del Rio T."/>
            <person name="Dalin E."/>
            <person name="Tice H."/>
            <person name="Bruce D."/>
            <person name="Goodwin L."/>
            <person name="Pitluck S."/>
            <person name="Sims D."/>
            <person name="Brettin T."/>
            <person name="Detter J.C."/>
            <person name="Han C."/>
            <person name="Larimer F."/>
            <person name="Land M."/>
            <person name="Hauser L."/>
            <person name="Kyrpides N."/>
            <person name="Ivanova N."/>
            <person name="Marx C.J."/>
            <person name="Richardson P."/>
        </authorList>
    </citation>
    <scope>NUCLEOTIDE SEQUENCE [LARGE SCALE GENOMIC DNA]</scope>
    <source>
        <strain>LMG 21967 / CNCM I-2342 / ORS 2060</strain>
    </source>
</reference>
<sequence>MPSLTHLDATGAANMVDVSDKAPTARTARAEGTIVMLPETLRLIREGDAKKGDVLGTARLAGIMAAKRTHELIPLCHPLLLAKVRVDCEPDPALPGIRITAEVKVQGPTGVEMEALTAVSVACLTVYDMVKAADRGMRIEGIRLLQKSGGRSGLYEAEPA</sequence>
<name>MOAC_METNO</name>
<keyword id="KW-0456">Lyase</keyword>
<keyword id="KW-0501">Molybdenum cofactor biosynthesis</keyword>
<keyword id="KW-1185">Reference proteome</keyword>
<dbReference type="EC" id="4.6.1.17" evidence="1"/>
<dbReference type="EMBL" id="CP001349">
    <property type="protein sequence ID" value="ACL60419.1"/>
    <property type="molecule type" value="Genomic_DNA"/>
</dbReference>
<dbReference type="RefSeq" id="WP_015932024.1">
    <property type="nucleotide sequence ID" value="NC_011894.1"/>
</dbReference>
<dbReference type="SMR" id="B8IPA1"/>
<dbReference type="STRING" id="460265.Mnod_5577"/>
<dbReference type="KEGG" id="mno:Mnod_5577"/>
<dbReference type="eggNOG" id="COG0315">
    <property type="taxonomic scope" value="Bacteria"/>
</dbReference>
<dbReference type="HOGENOM" id="CLU_074693_1_1_5"/>
<dbReference type="OrthoDB" id="9794429at2"/>
<dbReference type="UniPathway" id="UPA00344"/>
<dbReference type="Proteomes" id="UP000008207">
    <property type="component" value="Chromosome"/>
</dbReference>
<dbReference type="GO" id="GO:0061799">
    <property type="term" value="F:cyclic pyranopterin monophosphate synthase activity"/>
    <property type="evidence" value="ECO:0007669"/>
    <property type="project" value="UniProtKB-UniRule"/>
</dbReference>
<dbReference type="GO" id="GO:0006777">
    <property type="term" value="P:Mo-molybdopterin cofactor biosynthetic process"/>
    <property type="evidence" value="ECO:0007669"/>
    <property type="project" value="UniProtKB-UniRule"/>
</dbReference>
<dbReference type="CDD" id="cd01420">
    <property type="entry name" value="MoaC_PE"/>
    <property type="match status" value="1"/>
</dbReference>
<dbReference type="Gene3D" id="3.30.70.640">
    <property type="entry name" value="Molybdopterin cofactor biosynthesis C (MoaC) domain"/>
    <property type="match status" value="1"/>
</dbReference>
<dbReference type="HAMAP" id="MF_01224_B">
    <property type="entry name" value="MoaC_B"/>
    <property type="match status" value="1"/>
</dbReference>
<dbReference type="InterPro" id="IPR023045">
    <property type="entry name" value="MoaC"/>
</dbReference>
<dbReference type="InterPro" id="IPR047594">
    <property type="entry name" value="MoaC_bact/euk"/>
</dbReference>
<dbReference type="InterPro" id="IPR036522">
    <property type="entry name" value="MoaC_sf"/>
</dbReference>
<dbReference type="InterPro" id="IPR050105">
    <property type="entry name" value="MoCo_biosynth_MoaA/MoaC"/>
</dbReference>
<dbReference type="InterPro" id="IPR002820">
    <property type="entry name" value="Mopterin_CF_biosynth-C_dom"/>
</dbReference>
<dbReference type="NCBIfam" id="TIGR00581">
    <property type="entry name" value="moaC"/>
    <property type="match status" value="1"/>
</dbReference>
<dbReference type="NCBIfam" id="NF006870">
    <property type="entry name" value="PRK09364.1"/>
    <property type="match status" value="1"/>
</dbReference>
<dbReference type="PANTHER" id="PTHR22960:SF29">
    <property type="entry name" value="CYCLIC PYRANOPTERIN MONOPHOSPHATE SYNTHASE"/>
    <property type="match status" value="1"/>
</dbReference>
<dbReference type="PANTHER" id="PTHR22960">
    <property type="entry name" value="MOLYBDOPTERIN COFACTOR SYNTHESIS PROTEIN A"/>
    <property type="match status" value="1"/>
</dbReference>
<dbReference type="Pfam" id="PF01967">
    <property type="entry name" value="MoaC"/>
    <property type="match status" value="1"/>
</dbReference>
<dbReference type="SUPFAM" id="SSF55040">
    <property type="entry name" value="Molybdenum cofactor biosynthesis protein C, MoaC"/>
    <property type="match status" value="1"/>
</dbReference>
<feature type="chain" id="PRO_1000164895" description="Cyclic pyranopterin monophosphate synthase">
    <location>
        <begin position="1"/>
        <end position="160"/>
    </location>
</feature>
<feature type="active site" evidence="1">
    <location>
        <position position="128"/>
    </location>
</feature>
<feature type="binding site" evidence="1">
    <location>
        <begin position="75"/>
        <end position="77"/>
    </location>
    <ligand>
        <name>substrate</name>
    </ligand>
</feature>
<feature type="binding site" evidence="1">
    <location>
        <begin position="113"/>
        <end position="114"/>
    </location>
    <ligand>
        <name>substrate</name>
    </ligand>
</feature>
<protein>
    <recommendedName>
        <fullName evidence="1">Cyclic pyranopterin monophosphate synthase</fullName>
        <ecNumber evidence="1">4.6.1.17</ecNumber>
    </recommendedName>
    <alternativeName>
        <fullName evidence="1">Molybdenum cofactor biosynthesis protein C</fullName>
    </alternativeName>
</protein>
<evidence type="ECO:0000255" key="1">
    <source>
        <dbReference type="HAMAP-Rule" id="MF_01224"/>
    </source>
</evidence>
<comment type="function">
    <text evidence="1">Catalyzes the conversion of (8S)-3',8-cyclo-7,8-dihydroguanosine 5'-triphosphate to cyclic pyranopterin monophosphate (cPMP).</text>
</comment>
<comment type="catalytic activity">
    <reaction evidence="1">
        <text>(8S)-3',8-cyclo-7,8-dihydroguanosine 5'-triphosphate = cyclic pyranopterin phosphate + diphosphate</text>
        <dbReference type="Rhea" id="RHEA:49580"/>
        <dbReference type="ChEBI" id="CHEBI:33019"/>
        <dbReference type="ChEBI" id="CHEBI:59648"/>
        <dbReference type="ChEBI" id="CHEBI:131766"/>
        <dbReference type="EC" id="4.6.1.17"/>
    </reaction>
</comment>
<comment type="pathway">
    <text evidence="1">Cofactor biosynthesis; molybdopterin biosynthesis.</text>
</comment>
<comment type="subunit">
    <text evidence="1">Homohexamer; trimer of dimers.</text>
</comment>
<comment type="similarity">
    <text evidence="1">Belongs to the MoaC family.</text>
</comment>
<proteinExistence type="inferred from homology"/>
<gene>
    <name evidence="1" type="primary">moaC</name>
    <name type="ordered locus">Mnod_5577</name>
</gene>